<reference key="1">
    <citation type="journal article" date="2002" name="Nature">
        <title>The genome sequence of Schizosaccharomyces pombe.</title>
        <authorList>
            <person name="Wood V."/>
            <person name="Gwilliam R."/>
            <person name="Rajandream M.A."/>
            <person name="Lyne M.H."/>
            <person name="Lyne R."/>
            <person name="Stewart A."/>
            <person name="Sgouros J.G."/>
            <person name="Peat N."/>
            <person name="Hayles J."/>
            <person name="Baker S.G."/>
            <person name="Basham D."/>
            <person name="Bowman S."/>
            <person name="Brooks K."/>
            <person name="Brown D."/>
            <person name="Brown S."/>
            <person name="Chillingworth T."/>
            <person name="Churcher C.M."/>
            <person name="Collins M."/>
            <person name="Connor R."/>
            <person name="Cronin A."/>
            <person name="Davis P."/>
            <person name="Feltwell T."/>
            <person name="Fraser A."/>
            <person name="Gentles S."/>
            <person name="Goble A."/>
            <person name="Hamlin N."/>
            <person name="Harris D.E."/>
            <person name="Hidalgo J."/>
            <person name="Hodgson G."/>
            <person name="Holroyd S."/>
            <person name="Hornsby T."/>
            <person name="Howarth S."/>
            <person name="Huckle E.J."/>
            <person name="Hunt S."/>
            <person name="Jagels K."/>
            <person name="James K.D."/>
            <person name="Jones L."/>
            <person name="Jones M."/>
            <person name="Leather S."/>
            <person name="McDonald S."/>
            <person name="McLean J."/>
            <person name="Mooney P."/>
            <person name="Moule S."/>
            <person name="Mungall K.L."/>
            <person name="Murphy L.D."/>
            <person name="Niblett D."/>
            <person name="Odell C."/>
            <person name="Oliver K."/>
            <person name="O'Neil S."/>
            <person name="Pearson D."/>
            <person name="Quail M.A."/>
            <person name="Rabbinowitsch E."/>
            <person name="Rutherford K.M."/>
            <person name="Rutter S."/>
            <person name="Saunders D."/>
            <person name="Seeger K."/>
            <person name="Sharp S."/>
            <person name="Skelton J."/>
            <person name="Simmonds M.N."/>
            <person name="Squares R."/>
            <person name="Squares S."/>
            <person name="Stevens K."/>
            <person name="Taylor K."/>
            <person name="Taylor R.G."/>
            <person name="Tivey A."/>
            <person name="Walsh S.V."/>
            <person name="Warren T."/>
            <person name="Whitehead S."/>
            <person name="Woodward J.R."/>
            <person name="Volckaert G."/>
            <person name="Aert R."/>
            <person name="Robben J."/>
            <person name="Grymonprez B."/>
            <person name="Weltjens I."/>
            <person name="Vanstreels E."/>
            <person name="Rieger M."/>
            <person name="Schaefer M."/>
            <person name="Mueller-Auer S."/>
            <person name="Gabel C."/>
            <person name="Fuchs M."/>
            <person name="Duesterhoeft A."/>
            <person name="Fritzc C."/>
            <person name="Holzer E."/>
            <person name="Moestl D."/>
            <person name="Hilbert H."/>
            <person name="Borzym K."/>
            <person name="Langer I."/>
            <person name="Beck A."/>
            <person name="Lehrach H."/>
            <person name="Reinhardt R."/>
            <person name="Pohl T.M."/>
            <person name="Eger P."/>
            <person name="Zimmermann W."/>
            <person name="Wedler H."/>
            <person name="Wambutt R."/>
            <person name="Purnelle B."/>
            <person name="Goffeau A."/>
            <person name="Cadieu E."/>
            <person name="Dreano S."/>
            <person name="Gloux S."/>
            <person name="Lelaure V."/>
            <person name="Mottier S."/>
            <person name="Galibert F."/>
            <person name="Aves S.J."/>
            <person name="Xiang Z."/>
            <person name="Hunt C."/>
            <person name="Moore K."/>
            <person name="Hurst S.M."/>
            <person name="Lucas M."/>
            <person name="Rochet M."/>
            <person name="Gaillardin C."/>
            <person name="Tallada V.A."/>
            <person name="Garzon A."/>
            <person name="Thode G."/>
            <person name="Daga R.R."/>
            <person name="Cruzado L."/>
            <person name="Jimenez J."/>
            <person name="Sanchez M."/>
            <person name="del Rey F."/>
            <person name="Benito J."/>
            <person name="Dominguez A."/>
            <person name="Revuelta J.L."/>
            <person name="Moreno S."/>
            <person name="Armstrong J."/>
            <person name="Forsburg S.L."/>
            <person name="Cerutti L."/>
            <person name="Lowe T."/>
            <person name="McCombie W.R."/>
            <person name="Paulsen I."/>
            <person name="Potashkin J."/>
            <person name="Shpakovski G.V."/>
            <person name="Ussery D."/>
            <person name="Barrell B.G."/>
            <person name="Nurse P."/>
        </authorList>
    </citation>
    <scope>NUCLEOTIDE SEQUENCE [LARGE SCALE GENOMIC DNA]</scope>
    <source>
        <strain>972 / ATCC 24843</strain>
    </source>
</reference>
<reference key="2">
    <citation type="journal article" date="2011" name="Science">
        <title>Comparative functional genomics of the fission yeasts.</title>
        <authorList>
            <person name="Rhind N."/>
            <person name="Chen Z."/>
            <person name="Yassour M."/>
            <person name="Thompson D.A."/>
            <person name="Haas B.J."/>
            <person name="Habib N."/>
            <person name="Wapinski I."/>
            <person name="Roy S."/>
            <person name="Lin M.F."/>
            <person name="Heiman D.I."/>
            <person name="Young S.K."/>
            <person name="Furuya K."/>
            <person name="Guo Y."/>
            <person name="Pidoux A."/>
            <person name="Chen H.M."/>
            <person name="Robbertse B."/>
            <person name="Goldberg J.M."/>
            <person name="Aoki K."/>
            <person name="Bayne E.H."/>
            <person name="Berlin A.M."/>
            <person name="Desjardins C.A."/>
            <person name="Dobbs E."/>
            <person name="Dukaj L."/>
            <person name="Fan L."/>
            <person name="FitzGerald M.G."/>
            <person name="French C."/>
            <person name="Gujja S."/>
            <person name="Hansen K."/>
            <person name="Keifenheim D."/>
            <person name="Levin J.Z."/>
            <person name="Mosher R.A."/>
            <person name="Mueller C.A."/>
            <person name="Pfiffner J."/>
            <person name="Priest M."/>
            <person name="Russ C."/>
            <person name="Smialowska A."/>
            <person name="Swoboda P."/>
            <person name="Sykes S.M."/>
            <person name="Vaughn M."/>
            <person name="Vengrova S."/>
            <person name="Yoder R."/>
            <person name="Zeng Q."/>
            <person name="Allshire R."/>
            <person name="Baulcombe D."/>
            <person name="Birren B.W."/>
            <person name="Brown W."/>
            <person name="Ekwall K."/>
            <person name="Kellis M."/>
            <person name="Leatherwood J."/>
            <person name="Levin H."/>
            <person name="Margalit H."/>
            <person name="Martienssen R."/>
            <person name="Nieduszynski C.A."/>
            <person name="Spatafora J.W."/>
            <person name="Friedman N."/>
            <person name="Dalgaard J.Z."/>
            <person name="Baumann P."/>
            <person name="Niki H."/>
            <person name="Regev A."/>
            <person name="Nusbaum C."/>
        </authorList>
    </citation>
    <scope>IDENTIFICATION</scope>
</reference>
<reference key="3">
    <citation type="journal article" date="2011" name="Genetics">
        <title>Augmented annotation of the Schizosaccharomyces pombe genome reveals additional genes required for growth and viability.</title>
        <authorList>
            <person name="Bitton D.A."/>
            <person name="Wood V."/>
            <person name="Scutt P.J."/>
            <person name="Grallert A."/>
            <person name="Yates T."/>
            <person name="Smith D.L."/>
            <person name="Hagan I.M."/>
            <person name="Miller C.J."/>
        </authorList>
    </citation>
    <scope>IDENTIFICATION</scope>
    <scope>INDUCTION</scope>
</reference>
<feature type="chain" id="PRO_0000416517" description="Uncharacterized protein tam8">
    <location>
        <begin position="1"/>
        <end position="77"/>
    </location>
</feature>
<feature type="region of interest" description="Disordered" evidence="1">
    <location>
        <begin position="1"/>
        <end position="20"/>
    </location>
</feature>
<feature type="region of interest" description="Disordered" evidence="1">
    <location>
        <begin position="31"/>
        <end position="52"/>
    </location>
</feature>
<feature type="compositionally biased region" description="Polar residues" evidence="1">
    <location>
        <begin position="1"/>
        <end position="15"/>
    </location>
</feature>
<feature type="compositionally biased region" description="Acidic residues" evidence="1">
    <location>
        <begin position="33"/>
        <end position="44"/>
    </location>
</feature>
<name>TAM8_SCHPO</name>
<protein>
    <recommendedName>
        <fullName>Uncharacterized protein tam8</fullName>
    </recommendedName>
    <alternativeName>
        <fullName>Transcripts altered in meiosis protein 8</fullName>
    </alternativeName>
</protein>
<accession>G2TRQ2</accession>
<sequence length="77" mass="8980">MNRTSESVEPQQNEKTAVHWSREWVPVVVDTYSNEDDEDNEEGDESRPQRTFLVKRWVQDNVQVEKKGDEETAAADN</sequence>
<dbReference type="EMBL" id="CU329671">
    <property type="protein sequence ID" value="CCD31365.1"/>
    <property type="molecule type" value="Genomic_DNA"/>
</dbReference>
<dbReference type="RefSeq" id="XP_004001712.1">
    <property type="nucleotide sequence ID" value="XM_004001663.1"/>
</dbReference>
<dbReference type="iPTMnet" id="G2TRQ2"/>
<dbReference type="PaxDb" id="4896-SPBC3H7.18.1"/>
<dbReference type="EnsemblFungi" id="SPBC3H7.18.1">
    <property type="protein sequence ID" value="SPBC3H7.18.1:pep"/>
    <property type="gene ID" value="SPBC3H7.18"/>
</dbReference>
<dbReference type="PomBase" id="SPBC3H7.18">
    <property type="gene designation" value="tam8"/>
</dbReference>
<dbReference type="VEuPathDB" id="FungiDB:SPBC3H7.18"/>
<dbReference type="HOGENOM" id="CLU_2655852_0_0_1"/>
<dbReference type="InParanoid" id="G2TRQ2"/>
<dbReference type="OMA" id="WSREWVP"/>
<dbReference type="PRO" id="PR:G2TRQ2"/>
<dbReference type="Proteomes" id="UP000002485">
    <property type="component" value="Chromosome II"/>
</dbReference>
<comment type="induction">
    <text evidence="2">Differentially expressed during meiosis.</text>
</comment>
<proteinExistence type="evidence at transcript level"/>
<keyword id="KW-1185">Reference proteome</keyword>
<gene>
    <name type="primary">tam8</name>
    <name type="ORF">SPBC3H7.18</name>
</gene>
<evidence type="ECO:0000256" key="1">
    <source>
        <dbReference type="SAM" id="MobiDB-lite"/>
    </source>
</evidence>
<evidence type="ECO:0000269" key="2">
    <source>
    </source>
</evidence>
<organism>
    <name type="scientific">Schizosaccharomyces pombe (strain 972 / ATCC 24843)</name>
    <name type="common">Fission yeast</name>
    <dbReference type="NCBI Taxonomy" id="284812"/>
    <lineage>
        <taxon>Eukaryota</taxon>
        <taxon>Fungi</taxon>
        <taxon>Dikarya</taxon>
        <taxon>Ascomycota</taxon>
        <taxon>Taphrinomycotina</taxon>
        <taxon>Schizosaccharomycetes</taxon>
        <taxon>Schizosaccharomycetales</taxon>
        <taxon>Schizosaccharomycetaceae</taxon>
        <taxon>Schizosaccharomyces</taxon>
    </lineage>
</organism>